<name>RPOA_STAEQ</name>
<keyword id="KW-0240">DNA-directed RNA polymerase</keyword>
<keyword id="KW-0548">Nucleotidyltransferase</keyword>
<keyword id="KW-1185">Reference proteome</keyword>
<keyword id="KW-0804">Transcription</keyword>
<keyword id="KW-0808">Transferase</keyword>
<dbReference type="EC" id="2.7.7.6" evidence="1"/>
<dbReference type="EMBL" id="CP000029">
    <property type="protein sequence ID" value="AAW55198.1"/>
    <property type="molecule type" value="Genomic_DNA"/>
</dbReference>
<dbReference type="RefSeq" id="WP_001829787.1">
    <property type="nucleotide sequence ID" value="NC_002976.3"/>
</dbReference>
<dbReference type="SMR" id="Q5HM25"/>
<dbReference type="STRING" id="176279.SERP1805"/>
<dbReference type="KEGG" id="ser:SERP1805"/>
<dbReference type="eggNOG" id="COG0202">
    <property type="taxonomic scope" value="Bacteria"/>
</dbReference>
<dbReference type="HOGENOM" id="CLU_053084_0_1_9"/>
<dbReference type="Proteomes" id="UP000000531">
    <property type="component" value="Chromosome"/>
</dbReference>
<dbReference type="GO" id="GO:0005737">
    <property type="term" value="C:cytoplasm"/>
    <property type="evidence" value="ECO:0007669"/>
    <property type="project" value="UniProtKB-ARBA"/>
</dbReference>
<dbReference type="GO" id="GO:0000428">
    <property type="term" value="C:DNA-directed RNA polymerase complex"/>
    <property type="evidence" value="ECO:0007669"/>
    <property type="project" value="UniProtKB-KW"/>
</dbReference>
<dbReference type="GO" id="GO:0003677">
    <property type="term" value="F:DNA binding"/>
    <property type="evidence" value="ECO:0007669"/>
    <property type="project" value="UniProtKB-UniRule"/>
</dbReference>
<dbReference type="GO" id="GO:0003899">
    <property type="term" value="F:DNA-directed RNA polymerase activity"/>
    <property type="evidence" value="ECO:0007669"/>
    <property type="project" value="UniProtKB-UniRule"/>
</dbReference>
<dbReference type="GO" id="GO:0046983">
    <property type="term" value="F:protein dimerization activity"/>
    <property type="evidence" value="ECO:0007669"/>
    <property type="project" value="InterPro"/>
</dbReference>
<dbReference type="GO" id="GO:0006351">
    <property type="term" value="P:DNA-templated transcription"/>
    <property type="evidence" value="ECO:0007669"/>
    <property type="project" value="UniProtKB-UniRule"/>
</dbReference>
<dbReference type="CDD" id="cd06928">
    <property type="entry name" value="RNAP_alpha_NTD"/>
    <property type="match status" value="1"/>
</dbReference>
<dbReference type="FunFam" id="1.10.150.20:FF:000001">
    <property type="entry name" value="DNA-directed RNA polymerase subunit alpha"/>
    <property type="match status" value="1"/>
</dbReference>
<dbReference type="FunFam" id="2.170.120.12:FF:000001">
    <property type="entry name" value="DNA-directed RNA polymerase subunit alpha"/>
    <property type="match status" value="1"/>
</dbReference>
<dbReference type="Gene3D" id="1.10.150.20">
    <property type="entry name" value="5' to 3' exonuclease, C-terminal subdomain"/>
    <property type="match status" value="1"/>
</dbReference>
<dbReference type="Gene3D" id="2.170.120.12">
    <property type="entry name" value="DNA-directed RNA polymerase, insert domain"/>
    <property type="match status" value="1"/>
</dbReference>
<dbReference type="Gene3D" id="3.30.1360.10">
    <property type="entry name" value="RNA polymerase, RBP11-like subunit"/>
    <property type="match status" value="1"/>
</dbReference>
<dbReference type="HAMAP" id="MF_00059">
    <property type="entry name" value="RNApol_bact_RpoA"/>
    <property type="match status" value="1"/>
</dbReference>
<dbReference type="InterPro" id="IPR011262">
    <property type="entry name" value="DNA-dir_RNA_pol_insert"/>
</dbReference>
<dbReference type="InterPro" id="IPR011263">
    <property type="entry name" value="DNA-dir_RNA_pol_RpoA/D/Rpb3"/>
</dbReference>
<dbReference type="InterPro" id="IPR011773">
    <property type="entry name" value="DNA-dir_RpoA"/>
</dbReference>
<dbReference type="InterPro" id="IPR036603">
    <property type="entry name" value="RBP11-like"/>
</dbReference>
<dbReference type="InterPro" id="IPR011260">
    <property type="entry name" value="RNAP_asu_C"/>
</dbReference>
<dbReference type="InterPro" id="IPR036643">
    <property type="entry name" value="RNApol_insert_sf"/>
</dbReference>
<dbReference type="NCBIfam" id="NF003513">
    <property type="entry name" value="PRK05182.1-2"/>
    <property type="match status" value="1"/>
</dbReference>
<dbReference type="NCBIfam" id="NF003515">
    <property type="entry name" value="PRK05182.2-1"/>
    <property type="match status" value="1"/>
</dbReference>
<dbReference type="NCBIfam" id="NF003519">
    <property type="entry name" value="PRK05182.2-5"/>
    <property type="match status" value="1"/>
</dbReference>
<dbReference type="NCBIfam" id="TIGR02027">
    <property type="entry name" value="rpoA"/>
    <property type="match status" value="1"/>
</dbReference>
<dbReference type="Pfam" id="PF01000">
    <property type="entry name" value="RNA_pol_A_bac"/>
    <property type="match status" value="1"/>
</dbReference>
<dbReference type="Pfam" id="PF03118">
    <property type="entry name" value="RNA_pol_A_CTD"/>
    <property type="match status" value="1"/>
</dbReference>
<dbReference type="Pfam" id="PF01193">
    <property type="entry name" value="RNA_pol_L"/>
    <property type="match status" value="1"/>
</dbReference>
<dbReference type="SMART" id="SM00662">
    <property type="entry name" value="RPOLD"/>
    <property type="match status" value="1"/>
</dbReference>
<dbReference type="SUPFAM" id="SSF47789">
    <property type="entry name" value="C-terminal domain of RNA polymerase alpha subunit"/>
    <property type="match status" value="1"/>
</dbReference>
<dbReference type="SUPFAM" id="SSF56553">
    <property type="entry name" value="Insert subdomain of RNA polymerase alpha subunit"/>
    <property type="match status" value="1"/>
</dbReference>
<dbReference type="SUPFAM" id="SSF55257">
    <property type="entry name" value="RBP11-like subunits of RNA polymerase"/>
    <property type="match status" value="1"/>
</dbReference>
<organism>
    <name type="scientific">Staphylococcus epidermidis (strain ATCC 35984 / DSM 28319 / BCRC 17069 / CCUG 31568 / BM 3577 / RP62A)</name>
    <dbReference type="NCBI Taxonomy" id="176279"/>
    <lineage>
        <taxon>Bacteria</taxon>
        <taxon>Bacillati</taxon>
        <taxon>Bacillota</taxon>
        <taxon>Bacilli</taxon>
        <taxon>Bacillales</taxon>
        <taxon>Staphylococcaceae</taxon>
        <taxon>Staphylococcus</taxon>
    </lineage>
</organism>
<reference key="1">
    <citation type="journal article" date="2005" name="J. Bacteriol.">
        <title>Insights on evolution of virulence and resistance from the complete genome analysis of an early methicillin-resistant Staphylococcus aureus strain and a biofilm-producing methicillin-resistant Staphylococcus epidermidis strain.</title>
        <authorList>
            <person name="Gill S.R."/>
            <person name="Fouts D.E."/>
            <person name="Archer G.L."/>
            <person name="Mongodin E.F."/>
            <person name="DeBoy R.T."/>
            <person name="Ravel J."/>
            <person name="Paulsen I.T."/>
            <person name="Kolonay J.F."/>
            <person name="Brinkac L.M."/>
            <person name="Beanan M.J."/>
            <person name="Dodson R.J."/>
            <person name="Daugherty S.C."/>
            <person name="Madupu R."/>
            <person name="Angiuoli S.V."/>
            <person name="Durkin A.S."/>
            <person name="Haft D.H."/>
            <person name="Vamathevan J.J."/>
            <person name="Khouri H."/>
            <person name="Utterback T.R."/>
            <person name="Lee C."/>
            <person name="Dimitrov G."/>
            <person name="Jiang L."/>
            <person name="Qin H."/>
            <person name="Weidman J."/>
            <person name="Tran K."/>
            <person name="Kang K.H."/>
            <person name="Hance I.R."/>
            <person name="Nelson K.E."/>
            <person name="Fraser C.M."/>
        </authorList>
    </citation>
    <scope>NUCLEOTIDE SEQUENCE [LARGE SCALE GENOMIC DNA]</scope>
    <source>
        <strain>ATCC 35984 / DSM 28319 / BCRC 17069 / CCUG 31568 / BM 3577 / RP62A</strain>
    </source>
</reference>
<gene>
    <name evidence="1" type="primary">rpoA</name>
    <name type="ordered locus">SERP1805</name>
</gene>
<comment type="function">
    <text evidence="1">DNA-dependent RNA polymerase catalyzes the transcription of DNA into RNA using the four ribonucleoside triphosphates as substrates.</text>
</comment>
<comment type="catalytic activity">
    <reaction evidence="1">
        <text>RNA(n) + a ribonucleoside 5'-triphosphate = RNA(n+1) + diphosphate</text>
        <dbReference type="Rhea" id="RHEA:21248"/>
        <dbReference type="Rhea" id="RHEA-COMP:14527"/>
        <dbReference type="Rhea" id="RHEA-COMP:17342"/>
        <dbReference type="ChEBI" id="CHEBI:33019"/>
        <dbReference type="ChEBI" id="CHEBI:61557"/>
        <dbReference type="ChEBI" id="CHEBI:140395"/>
        <dbReference type="EC" id="2.7.7.6"/>
    </reaction>
</comment>
<comment type="subunit">
    <text evidence="1">Homodimer. The RNAP catalytic core consists of 2 alpha, 1 beta, 1 beta' and 1 omega subunit. When a sigma factor is associated with the core the holoenzyme is formed, which can initiate transcription.</text>
</comment>
<comment type="domain">
    <text evidence="1">The N-terminal domain is essential for RNAP assembly and basal transcription, whereas the C-terminal domain is involved in interaction with transcriptional regulators and with upstream promoter elements.</text>
</comment>
<comment type="similarity">
    <text evidence="1">Belongs to the RNA polymerase alpha chain family.</text>
</comment>
<evidence type="ECO:0000255" key="1">
    <source>
        <dbReference type="HAMAP-Rule" id="MF_00059"/>
    </source>
</evidence>
<feature type="chain" id="PRO_0000175386" description="DNA-directed RNA polymerase subunit alpha">
    <location>
        <begin position="1"/>
        <end position="314"/>
    </location>
</feature>
<feature type="region of interest" description="Alpha N-terminal domain (alpha-NTD)" evidence="1">
    <location>
        <begin position="1"/>
        <end position="228"/>
    </location>
</feature>
<feature type="region of interest" description="Alpha C-terminal domain (alpha-CTD)" evidence="1">
    <location>
        <begin position="245"/>
        <end position="314"/>
    </location>
</feature>
<accession>Q5HM25</accession>
<sequence length="314" mass="34986">MIEIEKPRIETIEVSEDAKFGKFVVEPLERGYGTTLGNSLRRILLSSLPGAAVKYIEIEGVLHEFSAVDNVVEDVSTIIMNIKKLALKIYSEEDKTLEIDVKDEGEVTASDITHDSDVEILNPELKIATVSKGGHLKVRLVANKGRGYALAEQNNTSDLPIGVIPVDSLYSPVERVNYTVENTRVGQSSDFDKLTLDVWTNGSITPQESVSLAAKIMTEHLNIFVSLTDEAQNAEIMIEKEEDQKEKVLEMSIEELDLSVRSYNCLKRAGINSVQELADKSEADMMKVRNLGRKSLEEVKYKLEDLGLGLRKED</sequence>
<protein>
    <recommendedName>
        <fullName evidence="1">DNA-directed RNA polymerase subunit alpha</fullName>
        <shortName evidence="1">RNAP subunit alpha</shortName>
        <ecNumber evidence="1">2.7.7.6</ecNumber>
    </recommendedName>
    <alternativeName>
        <fullName evidence="1">RNA polymerase subunit alpha</fullName>
    </alternativeName>
    <alternativeName>
        <fullName evidence="1">Transcriptase subunit alpha</fullName>
    </alternativeName>
</protein>
<proteinExistence type="inferred from homology"/>